<evidence type="ECO:0000255" key="1">
    <source>
        <dbReference type="HAMAP-Rule" id="MF_00384"/>
    </source>
</evidence>
<accession>A8G3W1</accession>
<keyword id="KW-0028">Amino-acid biosynthesis</keyword>
<keyword id="KW-0067">ATP-binding</keyword>
<keyword id="KW-0963">Cytoplasm</keyword>
<keyword id="KW-0418">Kinase</keyword>
<keyword id="KW-0547">Nucleotide-binding</keyword>
<keyword id="KW-0791">Threonine biosynthesis</keyword>
<keyword id="KW-0808">Transferase</keyword>
<feature type="chain" id="PRO_1000060701" description="Homoserine kinase">
    <location>
        <begin position="1"/>
        <end position="315"/>
    </location>
</feature>
<feature type="binding site" evidence="1">
    <location>
        <begin position="97"/>
        <end position="107"/>
    </location>
    <ligand>
        <name>ATP</name>
        <dbReference type="ChEBI" id="CHEBI:30616"/>
    </ligand>
</feature>
<name>KHSE_PROM2</name>
<organism>
    <name type="scientific">Prochlorococcus marinus (strain MIT 9215)</name>
    <dbReference type="NCBI Taxonomy" id="93060"/>
    <lineage>
        <taxon>Bacteria</taxon>
        <taxon>Bacillati</taxon>
        <taxon>Cyanobacteriota</taxon>
        <taxon>Cyanophyceae</taxon>
        <taxon>Synechococcales</taxon>
        <taxon>Prochlorococcaceae</taxon>
        <taxon>Prochlorococcus</taxon>
    </lineage>
</organism>
<proteinExistence type="inferred from homology"/>
<comment type="function">
    <text evidence="1">Catalyzes the ATP-dependent phosphorylation of L-homoserine to L-homoserine phosphate.</text>
</comment>
<comment type="catalytic activity">
    <reaction evidence="1">
        <text>L-homoserine + ATP = O-phospho-L-homoserine + ADP + H(+)</text>
        <dbReference type="Rhea" id="RHEA:13985"/>
        <dbReference type="ChEBI" id="CHEBI:15378"/>
        <dbReference type="ChEBI" id="CHEBI:30616"/>
        <dbReference type="ChEBI" id="CHEBI:57476"/>
        <dbReference type="ChEBI" id="CHEBI:57590"/>
        <dbReference type="ChEBI" id="CHEBI:456216"/>
        <dbReference type="EC" id="2.7.1.39"/>
    </reaction>
</comment>
<comment type="pathway">
    <text evidence="1">Amino-acid biosynthesis; L-threonine biosynthesis; L-threonine from L-aspartate: step 4/5.</text>
</comment>
<comment type="subcellular location">
    <subcellularLocation>
        <location evidence="1">Cytoplasm</location>
    </subcellularLocation>
</comment>
<comment type="similarity">
    <text evidence="1">Belongs to the GHMP kinase family. Homoserine kinase subfamily.</text>
</comment>
<reference key="1">
    <citation type="journal article" date="2007" name="PLoS Genet.">
        <title>Patterns and implications of gene gain and loss in the evolution of Prochlorococcus.</title>
        <authorList>
            <person name="Kettler G.C."/>
            <person name="Martiny A.C."/>
            <person name="Huang K."/>
            <person name="Zucker J."/>
            <person name="Coleman M.L."/>
            <person name="Rodrigue S."/>
            <person name="Chen F."/>
            <person name="Lapidus A."/>
            <person name="Ferriera S."/>
            <person name="Johnson J."/>
            <person name="Steglich C."/>
            <person name="Church G.M."/>
            <person name="Richardson P."/>
            <person name="Chisholm S.W."/>
        </authorList>
    </citation>
    <scope>NUCLEOTIDE SEQUENCE [LARGE SCALE GENOMIC DNA]</scope>
    <source>
        <strain>MIT 9215</strain>
    </source>
</reference>
<protein>
    <recommendedName>
        <fullName evidence="1">Homoserine kinase</fullName>
        <shortName evidence="1">HK</shortName>
        <shortName evidence="1">HSK</shortName>
        <ecNumber evidence="1">2.7.1.39</ecNumber>
    </recommendedName>
</protein>
<sequence length="315" mass="33442">MSIPEVGKKIRVTVPSTTANLGPGFDCLGAALDLYNEFIFTRIEGGGDRFDLIMESTDGNHLRGGPENLVFRAAQKVWENANIDPFALEARVKLAVPPARGLGSSATAIVAGLIGANAIMNSPLSKEKLLELAIDIEGHPDNVVPSLLGGLCLTARSSSQRWRIIRCDWHYSIKAVVAIPAIRLSTSEARKVMPKNVPISDAVTNMGALTLLLNGLKAGNAELIKEGMFDKLHEPYRWKLIKGGLEVKDAALNAGALGCAISGAGPSILALCKEENGKNVSQAMVKAWENSGVASRAPFLNVQTTGSQFSTISGK</sequence>
<dbReference type="EC" id="2.7.1.39" evidence="1"/>
<dbReference type="EMBL" id="CP000825">
    <property type="protein sequence ID" value="ABV50292.1"/>
    <property type="molecule type" value="Genomic_DNA"/>
</dbReference>
<dbReference type="RefSeq" id="WP_012007412.1">
    <property type="nucleotide sequence ID" value="NC_009840.1"/>
</dbReference>
<dbReference type="SMR" id="A8G3W1"/>
<dbReference type="STRING" id="93060.P9215_06771"/>
<dbReference type="KEGG" id="pmh:P9215_06771"/>
<dbReference type="eggNOG" id="COG0083">
    <property type="taxonomic scope" value="Bacteria"/>
</dbReference>
<dbReference type="HOGENOM" id="CLU_041243_0_2_3"/>
<dbReference type="OrthoDB" id="9769912at2"/>
<dbReference type="UniPathway" id="UPA00050">
    <property type="reaction ID" value="UER00064"/>
</dbReference>
<dbReference type="Proteomes" id="UP000002014">
    <property type="component" value="Chromosome"/>
</dbReference>
<dbReference type="GO" id="GO:0005737">
    <property type="term" value="C:cytoplasm"/>
    <property type="evidence" value="ECO:0007669"/>
    <property type="project" value="UniProtKB-SubCell"/>
</dbReference>
<dbReference type="GO" id="GO:0005524">
    <property type="term" value="F:ATP binding"/>
    <property type="evidence" value="ECO:0007669"/>
    <property type="project" value="UniProtKB-UniRule"/>
</dbReference>
<dbReference type="GO" id="GO:0004413">
    <property type="term" value="F:homoserine kinase activity"/>
    <property type="evidence" value="ECO:0007669"/>
    <property type="project" value="UniProtKB-UniRule"/>
</dbReference>
<dbReference type="GO" id="GO:0009088">
    <property type="term" value="P:threonine biosynthetic process"/>
    <property type="evidence" value="ECO:0007669"/>
    <property type="project" value="UniProtKB-UniRule"/>
</dbReference>
<dbReference type="Gene3D" id="3.30.230.10">
    <property type="match status" value="1"/>
</dbReference>
<dbReference type="Gene3D" id="3.30.70.890">
    <property type="entry name" value="GHMP kinase, C-terminal domain"/>
    <property type="match status" value="1"/>
</dbReference>
<dbReference type="HAMAP" id="MF_00384">
    <property type="entry name" value="Homoser_kinase"/>
    <property type="match status" value="1"/>
</dbReference>
<dbReference type="InterPro" id="IPR013750">
    <property type="entry name" value="GHMP_kinase_C_dom"/>
</dbReference>
<dbReference type="InterPro" id="IPR036554">
    <property type="entry name" value="GHMP_kinase_C_sf"/>
</dbReference>
<dbReference type="InterPro" id="IPR006204">
    <property type="entry name" value="GHMP_kinase_N_dom"/>
</dbReference>
<dbReference type="InterPro" id="IPR006203">
    <property type="entry name" value="GHMP_knse_ATP-bd_CS"/>
</dbReference>
<dbReference type="InterPro" id="IPR000870">
    <property type="entry name" value="Homoserine_kinase"/>
</dbReference>
<dbReference type="InterPro" id="IPR020568">
    <property type="entry name" value="Ribosomal_Su5_D2-typ_SF"/>
</dbReference>
<dbReference type="InterPro" id="IPR014721">
    <property type="entry name" value="Ribsml_uS5_D2-typ_fold_subgr"/>
</dbReference>
<dbReference type="NCBIfam" id="NF002288">
    <property type="entry name" value="PRK01212.1-4"/>
    <property type="match status" value="1"/>
</dbReference>
<dbReference type="NCBIfam" id="TIGR00191">
    <property type="entry name" value="thrB"/>
    <property type="match status" value="1"/>
</dbReference>
<dbReference type="PANTHER" id="PTHR20861:SF1">
    <property type="entry name" value="HOMOSERINE KINASE"/>
    <property type="match status" value="1"/>
</dbReference>
<dbReference type="PANTHER" id="PTHR20861">
    <property type="entry name" value="HOMOSERINE/4-DIPHOSPHOCYTIDYL-2-C-METHYL-D-ERYTHRITOL KINASE"/>
    <property type="match status" value="1"/>
</dbReference>
<dbReference type="Pfam" id="PF08544">
    <property type="entry name" value="GHMP_kinases_C"/>
    <property type="match status" value="1"/>
</dbReference>
<dbReference type="Pfam" id="PF00288">
    <property type="entry name" value="GHMP_kinases_N"/>
    <property type="match status" value="1"/>
</dbReference>
<dbReference type="PIRSF" id="PIRSF000676">
    <property type="entry name" value="Homoser_kin"/>
    <property type="match status" value="1"/>
</dbReference>
<dbReference type="PRINTS" id="PR00958">
    <property type="entry name" value="HOMSERKINASE"/>
</dbReference>
<dbReference type="SUPFAM" id="SSF55060">
    <property type="entry name" value="GHMP Kinase, C-terminal domain"/>
    <property type="match status" value="1"/>
</dbReference>
<dbReference type="SUPFAM" id="SSF54211">
    <property type="entry name" value="Ribosomal protein S5 domain 2-like"/>
    <property type="match status" value="1"/>
</dbReference>
<dbReference type="PROSITE" id="PS00627">
    <property type="entry name" value="GHMP_KINASES_ATP"/>
    <property type="match status" value="1"/>
</dbReference>
<gene>
    <name evidence="1" type="primary">thrB</name>
    <name type="ordered locus">P9215_06771</name>
</gene>